<organism>
    <name type="scientific">Bos taurus</name>
    <name type="common">Bovine</name>
    <dbReference type="NCBI Taxonomy" id="9913"/>
    <lineage>
        <taxon>Eukaryota</taxon>
        <taxon>Metazoa</taxon>
        <taxon>Chordata</taxon>
        <taxon>Craniata</taxon>
        <taxon>Vertebrata</taxon>
        <taxon>Euteleostomi</taxon>
        <taxon>Mammalia</taxon>
        <taxon>Eutheria</taxon>
        <taxon>Laurasiatheria</taxon>
        <taxon>Artiodactyla</taxon>
        <taxon>Ruminantia</taxon>
        <taxon>Pecora</taxon>
        <taxon>Bovidae</taxon>
        <taxon>Bovinae</taxon>
        <taxon>Bos</taxon>
    </lineage>
</organism>
<reference key="1">
    <citation type="journal article" date="2009" name="Genome Biol.">
        <title>A whole-genome assembly of the domestic cow, Bos taurus.</title>
        <authorList>
            <person name="Zimin A.V."/>
            <person name="Delcher A.L."/>
            <person name="Florea L."/>
            <person name="Kelley D.R."/>
            <person name="Schatz M.C."/>
            <person name="Puiu D."/>
            <person name="Hanrahan F."/>
            <person name="Pertea G."/>
            <person name="Van Tassell C.P."/>
            <person name="Sonstegard T.S."/>
            <person name="Marcais G."/>
            <person name="Roberts M."/>
            <person name="Subramanian P."/>
            <person name="Yorke J.A."/>
            <person name="Salzberg S.L."/>
        </authorList>
    </citation>
    <scope>NUCLEOTIDE SEQUENCE [LARGE SCALE GENOMIC DNA]</scope>
    <source>
        <strain>Hereford</strain>
    </source>
</reference>
<reference key="2">
    <citation type="submission" date="2007-07" db="EMBL/GenBank/DDBJ databases">
        <authorList>
            <consortium name="NIH - Mammalian Gene Collection (MGC) project"/>
        </authorList>
    </citation>
    <scope>NUCLEOTIDE SEQUENCE [LARGE SCALE MRNA]</scope>
    <source>
        <strain>Hereford</strain>
        <tissue>Hypothalamus</tissue>
    </source>
</reference>
<dbReference type="EMBL" id="DAAA02005602">
    <property type="status" value="NOT_ANNOTATED_CDS"/>
    <property type="molecule type" value="Genomic_DNA"/>
</dbReference>
<dbReference type="EMBL" id="DAAA02005603">
    <property type="status" value="NOT_ANNOTATED_CDS"/>
    <property type="molecule type" value="Genomic_DNA"/>
</dbReference>
<dbReference type="EMBL" id="DAAA02005604">
    <property type="status" value="NOT_ANNOTATED_CDS"/>
    <property type="molecule type" value="Genomic_DNA"/>
</dbReference>
<dbReference type="EMBL" id="BC149723">
    <property type="protein sequence ID" value="AAI49724.1"/>
    <property type="status" value="ALT_SEQ"/>
    <property type="molecule type" value="mRNA"/>
</dbReference>
<dbReference type="RefSeq" id="NP_001098908.2">
    <property type="nucleotide sequence ID" value="NM_001105438.2"/>
</dbReference>
<dbReference type="SMR" id="A7YY35"/>
<dbReference type="FunCoup" id="A7YY35">
    <property type="interactions" value="44"/>
</dbReference>
<dbReference type="STRING" id="9913.ENSBTAP00000016854"/>
<dbReference type="PaxDb" id="9913-ENSBTAP00000045493"/>
<dbReference type="Ensembl" id="ENSBTAT00000048464.4">
    <property type="protein sequence ID" value="ENSBTAP00000045493.3"/>
    <property type="gene ID" value="ENSBTAG00000034192.5"/>
</dbReference>
<dbReference type="GeneID" id="614993"/>
<dbReference type="KEGG" id="bta:614993"/>
<dbReference type="CTD" id="100652824"/>
<dbReference type="VEuPathDB" id="HostDB:ENSBTAG00000034192"/>
<dbReference type="VGNC" id="VGNC:30578">
    <property type="gene designation" value="KIAA2012"/>
</dbReference>
<dbReference type="eggNOG" id="KOG0181">
    <property type="taxonomic scope" value="Eukaryota"/>
</dbReference>
<dbReference type="GeneTree" id="ENSGT00860000133854"/>
<dbReference type="InParanoid" id="A7YY35"/>
<dbReference type="OrthoDB" id="6162046at2759"/>
<dbReference type="TreeFam" id="TF338103"/>
<dbReference type="Proteomes" id="UP000009136">
    <property type="component" value="Chromosome 2"/>
</dbReference>
<dbReference type="Bgee" id="ENSBTAG00000034192">
    <property type="expression patterns" value="Expressed in oviduct epithelium and 42 other cell types or tissues"/>
</dbReference>
<dbReference type="InterPro" id="IPR031440">
    <property type="entry name" value="DUF4670"/>
</dbReference>
<dbReference type="PANTHER" id="PTHR21937">
    <property type="entry name" value="CCDC66 DOMAIN-CONTAINING PROTEIN"/>
    <property type="match status" value="1"/>
</dbReference>
<dbReference type="PANTHER" id="PTHR21937:SF5">
    <property type="entry name" value="GENE 973-RELATED"/>
    <property type="match status" value="1"/>
</dbReference>
<dbReference type="Pfam" id="PF15709">
    <property type="entry name" value="DUF4670"/>
    <property type="match status" value="1"/>
</dbReference>
<proteinExistence type="evidence at transcript level"/>
<feature type="chain" id="PRO_0000332199" description="Uncharacterized protein KIAA2012 homolog">
    <location>
        <begin position="1"/>
        <end position="1147"/>
    </location>
</feature>
<feature type="region of interest" description="Disordered" evidence="2">
    <location>
        <begin position="226"/>
        <end position="245"/>
    </location>
</feature>
<feature type="region of interest" description="Disordered" evidence="2">
    <location>
        <begin position="255"/>
        <end position="297"/>
    </location>
</feature>
<feature type="region of interest" description="Disordered" evidence="2">
    <location>
        <begin position="431"/>
        <end position="617"/>
    </location>
</feature>
<feature type="region of interest" description="Disordered" evidence="2">
    <location>
        <begin position="647"/>
        <end position="670"/>
    </location>
</feature>
<feature type="region of interest" description="Disordered" evidence="2">
    <location>
        <begin position="705"/>
        <end position="945"/>
    </location>
</feature>
<feature type="region of interest" description="Disordered" evidence="2">
    <location>
        <begin position="1003"/>
        <end position="1032"/>
    </location>
</feature>
<feature type="region of interest" description="Disordered" evidence="2">
    <location>
        <begin position="1060"/>
        <end position="1090"/>
    </location>
</feature>
<feature type="coiled-coil region" evidence="1">
    <location>
        <begin position="743"/>
        <end position="804"/>
    </location>
</feature>
<feature type="coiled-coil region" evidence="1">
    <location>
        <begin position="907"/>
        <end position="1112"/>
    </location>
</feature>
<feature type="compositionally biased region" description="Basic and acidic residues" evidence="2">
    <location>
        <begin position="268"/>
        <end position="296"/>
    </location>
</feature>
<feature type="compositionally biased region" description="Basic residues" evidence="2">
    <location>
        <begin position="431"/>
        <end position="441"/>
    </location>
</feature>
<feature type="compositionally biased region" description="Low complexity" evidence="2">
    <location>
        <begin position="538"/>
        <end position="549"/>
    </location>
</feature>
<feature type="compositionally biased region" description="Polar residues" evidence="2">
    <location>
        <begin position="584"/>
        <end position="603"/>
    </location>
</feature>
<feature type="compositionally biased region" description="Polar residues" evidence="2">
    <location>
        <begin position="743"/>
        <end position="752"/>
    </location>
</feature>
<feature type="compositionally biased region" description="Basic and acidic residues" evidence="2">
    <location>
        <begin position="768"/>
        <end position="802"/>
    </location>
</feature>
<feature type="compositionally biased region" description="Basic residues" evidence="2">
    <location>
        <begin position="807"/>
        <end position="819"/>
    </location>
</feature>
<feature type="compositionally biased region" description="Polar residues" evidence="2">
    <location>
        <begin position="870"/>
        <end position="884"/>
    </location>
</feature>
<feature type="compositionally biased region" description="Basic and acidic residues" evidence="2">
    <location>
        <begin position="895"/>
        <end position="945"/>
    </location>
</feature>
<feature type="sequence conflict" description="In Ref. 2; AAI49724." evidence="3" ref="2">
    <original>H</original>
    <variation>R</variation>
    <location>
        <position position="783"/>
    </location>
</feature>
<keyword id="KW-0175">Coiled coil</keyword>
<keyword id="KW-1185">Reference proteome</keyword>
<accession>A7YY35</accession>
<accession>E1B9F4</accession>
<evidence type="ECO:0000255" key="1"/>
<evidence type="ECO:0000256" key="2">
    <source>
        <dbReference type="SAM" id="MobiDB-lite"/>
    </source>
</evidence>
<evidence type="ECO:0000305" key="3"/>
<sequence>MFTLSLLSRGHGKLVQNKQKLEVYFEPEDYLNWKSPEDYILVRKPQDEGNADQHTWSLFLPKTFSTRKGALILYSEGLAISAWTPEERRKGPYRPKGRRKRPDLELHTLQDLKEAILAYGRRQREQDRAWQPYLHFRSQPESQGLRQIQPGYSAKRYLRGLLRTWPPGTINKLQCAGYIKDSVLLQDSQLNVPKNLRPQQDLSGVPLKYHLLPVFPPFWIQQGKSFGQGQQDLDEGEAGAGGQVDQGSVVKDRGIQGTCLPPLKKQPWQKDETQTEDTSKDNHHCIHTSKENHQEKAQQTSRRTLGHALFDHSWLLHDKSHTTFYYGGTFPNRKADLSDKQGTMKLHQGRSSHLFKEPPAERCLFPPVASAAGSEKNMPGDMKKKKAPKALKLPLISEEPPRVLDPLRSQLKASEPPAELFIFPVEIHYHSQHPPKGKAQRRGAPQPESAPETEEYTSSWRPPLKQVSLRGSRALRVHLPMDTDRDTLSPQEDVAPPQKGTSSPSLRKGKKSPESQRGPDSPRTSGRSSPTGPPCERPAGGALPAAGQAYESVSSNAGHGEEESSIQHLLKVNTESRTDLHMNLNETSPLTQKPENQGAQQSLEAAAQKTGEPQSCINKGLICSNRKEFYTRKLHLDMTPFLKASREEMDDHEEGGELRENHPDAQDPVRRNMTLDPLCASLAKHMQTPEADTVQKASKDYNVHHRHRGLSGHGPDSPEGLDPIDTSFLPRGKEGKTEPRLFNQKTSNNISNEMELIEKAKSRKRAKTDKSKAPKREKEGKLHEEAEAAVGKSKESKAEKKSQLISKGKKTGAKGKRTRKEGNLETAAELSGPDGINSKETKDRSGGGFFRSGSGVEDPWVSSKVEAPESQVSIDGRSSPTQTAAVPGNMEPEEDRSHEDPSKAFLVKREQEKASRDRLRAERAEMRRLEVERKRREQEEQRRLQQEQLERAERMKEELELEQQRRVEEIRLRKQRLEEERQWQEEEERRQWLQLQMAQERARQQQEEFRRKCQELQRKKQQEEAERAEAEKQRLKELEMQLAEEQKHLMEMAEEERLEYQRRKQEAEEKTRWEAEDRRQKEKEAARLAQEEAMKQAQDQARQKDALKKHLHFHQELHKEASGLQWTHNISRPWVYSYFHFLQIPRP</sequence>
<protein>
    <recommendedName>
        <fullName evidence="3">Uncharacterized protein KIAA2012 homolog</fullName>
    </recommendedName>
</protein>
<gene>
    <name evidence="3" type="primary">KIAA2012</name>
</gene>
<name>K2012_BOVIN</name>
<comment type="sequence caution" evidence="3">
    <conflict type="frameshift">
        <sequence resource="EMBL-CDS" id="AAI49724"/>
    </conflict>
</comment>
<comment type="sequence caution" evidence="3">
    <conflict type="miscellaneous discrepancy">
        <sequence resource="EMBL-CDS" id="AAI49724"/>
    </conflict>
    <text>Wrong choice of frame.</text>
</comment>